<proteinExistence type="inferred from homology"/>
<reference key="1">
    <citation type="submission" date="2006-12" db="EMBL/GenBank/DDBJ databases">
        <title>Complete sequence of Mycobacterium vanbaalenii PYR-1.</title>
        <authorList>
            <consortium name="US DOE Joint Genome Institute"/>
            <person name="Copeland A."/>
            <person name="Lucas S."/>
            <person name="Lapidus A."/>
            <person name="Barry K."/>
            <person name="Detter J.C."/>
            <person name="Glavina del Rio T."/>
            <person name="Hammon N."/>
            <person name="Israni S."/>
            <person name="Dalin E."/>
            <person name="Tice H."/>
            <person name="Pitluck S."/>
            <person name="Singan V."/>
            <person name="Schmutz J."/>
            <person name="Larimer F."/>
            <person name="Land M."/>
            <person name="Hauser L."/>
            <person name="Kyrpides N."/>
            <person name="Anderson I.J."/>
            <person name="Miller C."/>
            <person name="Richardson P."/>
        </authorList>
    </citation>
    <scope>NUCLEOTIDE SEQUENCE [LARGE SCALE GENOMIC DNA]</scope>
    <source>
        <strain>DSM 7251 / JCM 13017 / BCRC 16820 / KCTC 9966 / NRRL B-24157 / PYR-1</strain>
    </source>
</reference>
<organism>
    <name type="scientific">Mycolicibacterium vanbaalenii (strain DSM 7251 / JCM 13017 / BCRC 16820 / KCTC 9966 / NRRL B-24157 / PYR-1)</name>
    <name type="common">Mycobacterium vanbaalenii</name>
    <dbReference type="NCBI Taxonomy" id="350058"/>
    <lineage>
        <taxon>Bacteria</taxon>
        <taxon>Bacillati</taxon>
        <taxon>Actinomycetota</taxon>
        <taxon>Actinomycetes</taxon>
        <taxon>Mycobacteriales</taxon>
        <taxon>Mycobacteriaceae</taxon>
        <taxon>Mycolicibacterium</taxon>
    </lineage>
</organism>
<protein>
    <recommendedName>
        <fullName evidence="1">Glucose-1-phosphate adenylyltransferase</fullName>
        <ecNumber evidence="1">2.7.7.27</ecNumber>
    </recommendedName>
    <alternativeName>
        <fullName evidence="1">ADP-glucose pyrophosphorylase</fullName>
        <shortName evidence="1">ADPGlc PPase</shortName>
    </alternativeName>
    <alternativeName>
        <fullName evidence="1">ADP-glucose synthase</fullName>
    </alternativeName>
</protein>
<dbReference type="EC" id="2.7.7.27" evidence="1"/>
<dbReference type="EMBL" id="CP000511">
    <property type="protein sequence ID" value="ABM15278.1"/>
    <property type="molecule type" value="Genomic_DNA"/>
</dbReference>
<dbReference type="RefSeq" id="WP_011781656.1">
    <property type="nucleotide sequence ID" value="NC_008726.1"/>
</dbReference>
<dbReference type="SMR" id="A1TDM8"/>
<dbReference type="STRING" id="350058.Mvan_4503"/>
<dbReference type="KEGG" id="mva:Mvan_4503"/>
<dbReference type="eggNOG" id="COG0448">
    <property type="taxonomic scope" value="Bacteria"/>
</dbReference>
<dbReference type="HOGENOM" id="CLU_029499_14_1_11"/>
<dbReference type="UniPathway" id="UPA00164"/>
<dbReference type="Proteomes" id="UP000009159">
    <property type="component" value="Chromosome"/>
</dbReference>
<dbReference type="GO" id="GO:0005524">
    <property type="term" value="F:ATP binding"/>
    <property type="evidence" value="ECO:0007669"/>
    <property type="project" value="UniProtKB-KW"/>
</dbReference>
<dbReference type="GO" id="GO:0008878">
    <property type="term" value="F:glucose-1-phosphate adenylyltransferase activity"/>
    <property type="evidence" value="ECO:0007669"/>
    <property type="project" value="UniProtKB-UniRule"/>
</dbReference>
<dbReference type="GO" id="GO:0005978">
    <property type="term" value="P:glycogen biosynthetic process"/>
    <property type="evidence" value="ECO:0007669"/>
    <property type="project" value="UniProtKB-UniRule"/>
</dbReference>
<dbReference type="CDD" id="cd02508">
    <property type="entry name" value="ADP_Glucose_PP"/>
    <property type="match status" value="1"/>
</dbReference>
<dbReference type="CDD" id="cd04651">
    <property type="entry name" value="LbH_G1P_AT_C"/>
    <property type="match status" value="1"/>
</dbReference>
<dbReference type="FunFam" id="2.160.10.10:FF:000020">
    <property type="entry name" value="Glucose-1-phosphate adenylyltransferase"/>
    <property type="match status" value="1"/>
</dbReference>
<dbReference type="FunFam" id="3.90.550.10:FF:000014">
    <property type="entry name" value="Glucose-1-phosphate adenylyltransferase"/>
    <property type="match status" value="1"/>
</dbReference>
<dbReference type="Gene3D" id="2.160.10.10">
    <property type="entry name" value="Hexapeptide repeat proteins"/>
    <property type="match status" value="1"/>
</dbReference>
<dbReference type="Gene3D" id="3.90.550.10">
    <property type="entry name" value="Spore Coat Polysaccharide Biosynthesis Protein SpsA, Chain A"/>
    <property type="match status" value="1"/>
</dbReference>
<dbReference type="HAMAP" id="MF_00624">
    <property type="entry name" value="GlgC"/>
    <property type="match status" value="1"/>
</dbReference>
<dbReference type="InterPro" id="IPR011831">
    <property type="entry name" value="ADP-Glc_PPase"/>
</dbReference>
<dbReference type="InterPro" id="IPR005836">
    <property type="entry name" value="ADP_Glu_pyroP_CS"/>
</dbReference>
<dbReference type="InterPro" id="IPR023049">
    <property type="entry name" value="GlgC_bac"/>
</dbReference>
<dbReference type="InterPro" id="IPR056818">
    <property type="entry name" value="GlmU/GlgC-like_hexapep"/>
</dbReference>
<dbReference type="InterPro" id="IPR005835">
    <property type="entry name" value="NTP_transferase_dom"/>
</dbReference>
<dbReference type="InterPro" id="IPR029044">
    <property type="entry name" value="Nucleotide-diphossugar_trans"/>
</dbReference>
<dbReference type="InterPro" id="IPR011004">
    <property type="entry name" value="Trimer_LpxA-like_sf"/>
</dbReference>
<dbReference type="NCBIfam" id="TIGR02091">
    <property type="entry name" value="glgC"/>
    <property type="match status" value="1"/>
</dbReference>
<dbReference type="NCBIfam" id="NF001947">
    <property type="entry name" value="PRK00725.1"/>
    <property type="match status" value="1"/>
</dbReference>
<dbReference type="NCBIfam" id="NF002023">
    <property type="entry name" value="PRK00844.1"/>
    <property type="match status" value="1"/>
</dbReference>
<dbReference type="PANTHER" id="PTHR43523:SF2">
    <property type="entry name" value="GLUCOSE-1-PHOSPHATE ADENYLYLTRANSFERASE"/>
    <property type="match status" value="1"/>
</dbReference>
<dbReference type="PANTHER" id="PTHR43523">
    <property type="entry name" value="GLUCOSE-1-PHOSPHATE ADENYLYLTRANSFERASE-RELATED"/>
    <property type="match status" value="1"/>
</dbReference>
<dbReference type="Pfam" id="PF24894">
    <property type="entry name" value="Hexapep_GlmU"/>
    <property type="match status" value="1"/>
</dbReference>
<dbReference type="Pfam" id="PF00483">
    <property type="entry name" value="NTP_transferase"/>
    <property type="match status" value="1"/>
</dbReference>
<dbReference type="SUPFAM" id="SSF53448">
    <property type="entry name" value="Nucleotide-diphospho-sugar transferases"/>
    <property type="match status" value="1"/>
</dbReference>
<dbReference type="SUPFAM" id="SSF51161">
    <property type="entry name" value="Trimeric LpxA-like enzymes"/>
    <property type="match status" value="1"/>
</dbReference>
<dbReference type="PROSITE" id="PS00808">
    <property type="entry name" value="ADP_GLC_PYROPHOSPH_1"/>
    <property type="match status" value="1"/>
</dbReference>
<dbReference type="PROSITE" id="PS00809">
    <property type="entry name" value="ADP_GLC_PYROPHOSPH_2"/>
    <property type="match status" value="1"/>
</dbReference>
<dbReference type="PROSITE" id="PS00810">
    <property type="entry name" value="ADP_GLC_PYROPHOSPH_3"/>
    <property type="match status" value="1"/>
</dbReference>
<sequence length="404" mass="43595">MREAPHVLGIVLAGGEGKRLYPLTADRAKPAVPFGGGYRLIDFVLSNLVNARFLRICVLTQYKSHSLDRHISQNWRLSGLAGEYITPVPAQQRLGPRWYTGSADAIYQSMNLIYDEDPDYIVIFGADHVYRMDPEQMVQQHIESGAGATVAGIRVPRAEASAFGCIDSDDSGRIRGFIEKPADPPGTPDDPEQTFVSMGNYIFTTKVLIDAIRADAEDDDSDHDMGGDIIPRLVADGMAAVYDFNDNEVPGATERDHGYWRDVGTLDAFYDAHMDLVSVHPVFNLYNKRWPIRGGAENLAPAKFVNGGSAQESVVGAGSIISAASVRNSVLSSNVVIDDGAIVEGSVIMPGARIGRGAVVRHAILDKNVVVGPGEMVGVDLDKDRERFSISAGGVVAVGKGVWI</sequence>
<evidence type="ECO:0000255" key="1">
    <source>
        <dbReference type="HAMAP-Rule" id="MF_00624"/>
    </source>
</evidence>
<gene>
    <name evidence="1" type="primary">glgC</name>
    <name type="ordered locus">Mvan_4503</name>
</gene>
<feature type="chain" id="PRO_1000051577" description="Glucose-1-phosphate adenylyltransferase">
    <location>
        <begin position="1"/>
        <end position="404"/>
    </location>
</feature>
<feature type="binding site" evidence="1">
    <location>
        <position position="99"/>
    </location>
    <ligand>
        <name>alpha-D-glucose 1-phosphate</name>
        <dbReference type="ChEBI" id="CHEBI:58601"/>
    </ligand>
</feature>
<feature type="binding site" evidence="1">
    <location>
        <position position="164"/>
    </location>
    <ligand>
        <name>alpha-D-glucose 1-phosphate</name>
        <dbReference type="ChEBI" id="CHEBI:58601"/>
    </ligand>
</feature>
<feature type="binding site" evidence="1">
    <location>
        <begin position="179"/>
        <end position="180"/>
    </location>
    <ligand>
        <name>alpha-D-glucose 1-phosphate</name>
        <dbReference type="ChEBI" id="CHEBI:58601"/>
    </ligand>
</feature>
<feature type="binding site" evidence="1">
    <location>
        <position position="197"/>
    </location>
    <ligand>
        <name>alpha-D-glucose 1-phosphate</name>
        <dbReference type="ChEBI" id="CHEBI:58601"/>
    </ligand>
</feature>
<accession>A1TDM8</accession>
<keyword id="KW-0067">ATP-binding</keyword>
<keyword id="KW-0119">Carbohydrate metabolism</keyword>
<keyword id="KW-0320">Glycogen biosynthesis</keyword>
<keyword id="KW-0321">Glycogen metabolism</keyword>
<keyword id="KW-0547">Nucleotide-binding</keyword>
<keyword id="KW-0548">Nucleotidyltransferase</keyword>
<keyword id="KW-0808">Transferase</keyword>
<comment type="function">
    <text evidence="1">Involved in the biosynthesis of ADP-glucose, a building block, required in the biosynthesis of maltose-1-phosphate (M1P) and in the elongation reactions to produce linear alpha-1,4-glucans. Catalyzes the reaction between ATP and alpha-D-glucose 1-phosphate (G1P) to produce pyrophosphate and ADP-Glc.</text>
</comment>
<comment type="catalytic activity">
    <reaction evidence="1">
        <text>alpha-D-glucose 1-phosphate + ATP + H(+) = ADP-alpha-D-glucose + diphosphate</text>
        <dbReference type="Rhea" id="RHEA:12120"/>
        <dbReference type="ChEBI" id="CHEBI:15378"/>
        <dbReference type="ChEBI" id="CHEBI:30616"/>
        <dbReference type="ChEBI" id="CHEBI:33019"/>
        <dbReference type="ChEBI" id="CHEBI:57498"/>
        <dbReference type="ChEBI" id="CHEBI:58601"/>
        <dbReference type="EC" id="2.7.7.27"/>
    </reaction>
</comment>
<comment type="pathway">
    <text evidence="1">Glycan biosynthesis; glycogen biosynthesis.</text>
</comment>
<comment type="similarity">
    <text evidence="1">Belongs to the bacterial/plant glucose-1-phosphate adenylyltransferase family.</text>
</comment>
<name>GLGC_MYCVP</name>